<gene>
    <name evidence="8" type="primary">PAPS2</name>
    <name evidence="11" type="ordered locus">At2g25850</name>
    <name evidence="12" type="ORF">F17H15.12</name>
</gene>
<name>PAPS2_ARATH</name>
<dbReference type="EC" id="2.7.7.19" evidence="5"/>
<dbReference type="EMBL" id="AF255297">
    <property type="protein sequence ID" value="AAF66438.2"/>
    <property type="molecule type" value="mRNA"/>
</dbReference>
<dbReference type="EMBL" id="AC005395">
    <property type="protein sequence ID" value="AAC42245.2"/>
    <property type="molecule type" value="Genomic_DNA"/>
</dbReference>
<dbReference type="EMBL" id="CP002685">
    <property type="protein sequence ID" value="AEC07761.1"/>
    <property type="molecule type" value="Genomic_DNA"/>
</dbReference>
<dbReference type="EMBL" id="CP002685">
    <property type="protein sequence ID" value="AEC07762.1"/>
    <property type="molecule type" value="Genomic_DNA"/>
</dbReference>
<dbReference type="EMBL" id="CP002685">
    <property type="protein sequence ID" value="AEC07763.1"/>
    <property type="molecule type" value="Genomic_DNA"/>
</dbReference>
<dbReference type="EMBL" id="CP002685">
    <property type="protein sequence ID" value="AEC07764.1"/>
    <property type="molecule type" value="Genomic_DNA"/>
</dbReference>
<dbReference type="EMBL" id="AY039974">
    <property type="protein sequence ID" value="AAK64151.1"/>
    <property type="molecule type" value="mRNA"/>
</dbReference>
<dbReference type="EMBL" id="AY074533">
    <property type="protein sequence ID" value="AAL69501.1"/>
    <property type="molecule type" value="mRNA"/>
</dbReference>
<dbReference type="PIR" id="E84653">
    <property type="entry name" value="E84653"/>
</dbReference>
<dbReference type="RefSeq" id="NP_001031417.1">
    <molecule id="O82312-4"/>
    <property type="nucleotide sequence ID" value="NM_001036340.1"/>
</dbReference>
<dbReference type="RefSeq" id="NP_001189603.1">
    <molecule id="O82312-2"/>
    <property type="nucleotide sequence ID" value="NM_001202674.2"/>
</dbReference>
<dbReference type="RefSeq" id="NP_565611.1">
    <molecule id="O82312-1"/>
    <property type="nucleotide sequence ID" value="NM_128145.4"/>
</dbReference>
<dbReference type="RefSeq" id="NP_850071.1">
    <molecule id="O82312-3"/>
    <property type="nucleotide sequence ID" value="NM_179740.2"/>
</dbReference>
<dbReference type="SMR" id="O82312"/>
<dbReference type="BioGRID" id="2479">
    <property type="interactions" value="3"/>
</dbReference>
<dbReference type="FunCoup" id="O82312">
    <property type="interactions" value="3961"/>
</dbReference>
<dbReference type="IntAct" id="O82312">
    <property type="interactions" value="6"/>
</dbReference>
<dbReference type="STRING" id="3702.O82312"/>
<dbReference type="PaxDb" id="3702-AT2G25850.2"/>
<dbReference type="ProteomicsDB" id="248638">
    <molecule id="O82312-1"/>
</dbReference>
<dbReference type="EnsemblPlants" id="AT2G25850.1">
    <molecule id="O82312-3"/>
    <property type="protein sequence ID" value="AT2G25850.1"/>
    <property type="gene ID" value="AT2G25850"/>
</dbReference>
<dbReference type="EnsemblPlants" id="AT2G25850.2">
    <molecule id="O82312-1"/>
    <property type="protein sequence ID" value="AT2G25850.2"/>
    <property type="gene ID" value="AT2G25850"/>
</dbReference>
<dbReference type="EnsemblPlants" id="AT2G25850.3">
    <molecule id="O82312-4"/>
    <property type="protein sequence ID" value="AT2G25850.3"/>
    <property type="gene ID" value="AT2G25850"/>
</dbReference>
<dbReference type="EnsemblPlants" id="AT2G25850.4">
    <molecule id="O82312-2"/>
    <property type="protein sequence ID" value="AT2G25850.4"/>
    <property type="gene ID" value="AT2G25850"/>
</dbReference>
<dbReference type="GeneID" id="817127"/>
<dbReference type="Gramene" id="AT2G25850.1">
    <molecule id="O82312-3"/>
    <property type="protein sequence ID" value="AT2G25850.1"/>
    <property type="gene ID" value="AT2G25850"/>
</dbReference>
<dbReference type="Gramene" id="AT2G25850.2">
    <molecule id="O82312-1"/>
    <property type="protein sequence ID" value="AT2G25850.2"/>
    <property type="gene ID" value="AT2G25850"/>
</dbReference>
<dbReference type="Gramene" id="AT2G25850.3">
    <molecule id="O82312-4"/>
    <property type="protein sequence ID" value="AT2G25850.3"/>
    <property type="gene ID" value="AT2G25850"/>
</dbReference>
<dbReference type="Gramene" id="AT2G25850.4">
    <molecule id="O82312-2"/>
    <property type="protein sequence ID" value="AT2G25850.4"/>
    <property type="gene ID" value="AT2G25850"/>
</dbReference>
<dbReference type="KEGG" id="ath:AT2G25850"/>
<dbReference type="Araport" id="AT2G25850"/>
<dbReference type="TAIR" id="AT2G25850">
    <property type="gene designation" value="PAPS2"/>
</dbReference>
<dbReference type="eggNOG" id="KOG2245">
    <property type="taxonomic scope" value="Eukaryota"/>
</dbReference>
<dbReference type="InParanoid" id="O82312"/>
<dbReference type="PhylomeDB" id="O82312"/>
<dbReference type="BRENDA" id="2.7.7.19">
    <property type="organism ID" value="399"/>
</dbReference>
<dbReference type="PRO" id="PR:O82312"/>
<dbReference type="Proteomes" id="UP000006548">
    <property type="component" value="Chromosome 2"/>
</dbReference>
<dbReference type="ExpressionAtlas" id="O82312">
    <property type="expression patterns" value="baseline and differential"/>
</dbReference>
<dbReference type="GO" id="GO:0005737">
    <property type="term" value="C:cytoplasm"/>
    <property type="evidence" value="ECO:0007669"/>
    <property type="project" value="UniProtKB-SubCell"/>
</dbReference>
<dbReference type="GO" id="GO:0005634">
    <property type="term" value="C:nucleus"/>
    <property type="evidence" value="ECO:0000314"/>
    <property type="project" value="TAIR"/>
</dbReference>
<dbReference type="GO" id="GO:0005524">
    <property type="term" value="F:ATP binding"/>
    <property type="evidence" value="ECO:0007669"/>
    <property type="project" value="UniProtKB-KW"/>
</dbReference>
<dbReference type="GO" id="GO:0046872">
    <property type="term" value="F:metal ion binding"/>
    <property type="evidence" value="ECO:0007669"/>
    <property type="project" value="UniProtKB-KW"/>
</dbReference>
<dbReference type="GO" id="GO:1990817">
    <property type="term" value="F:poly(A) RNA polymerase activity"/>
    <property type="evidence" value="ECO:0007669"/>
    <property type="project" value="UniProtKB-EC"/>
</dbReference>
<dbReference type="GO" id="GO:0003723">
    <property type="term" value="F:RNA binding"/>
    <property type="evidence" value="ECO:0007669"/>
    <property type="project" value="InterPro"/>
</dbReference>
<dbReference type="GO" id="GO:0006397">
    <property type="term" value="P:mRNA processing"/>
    <property type="evidence" value="ECO:0007669"/>
    <property type="project" value="UniProtKB-KW"/>
</dbReference>
<dbReference type="GO" id="GO:0031123">
    <property type="term" value="P:RNA 3'-end processing"/>
    <property type="evidence" value="ECO:0007669"/>
    <property type="project" value="InterPro"/>
</dbReference>
<dbReference type="CDD" id="cd05402">
    <property type="entry name" value="NT_PAP_TUTase"/>
    <property type="match status" value="1"/>
</dbReference>
<dbReference type="FunFam" id="3.30.70.590:FF:000002">
    <property type="entry name" value="Nuclear poly(A) polymerase 4"/>
    <property type="match status" value="1"/>
</dbReference>
<dbReference type="FunFam" id="3.30.460.10:FF:000002">
    <property type="entry name" value="Poly(A) polymerase alpha, putative"/>
    <property type="match status" value="1"/>
</dbReference>
<dbReference type="FunFam" id="1.10.1410.10:FF:000001">
    <property type="entry name" value="Putative poly(A) polymerase gamma"/>
    <property type="match status" value="1"/>
</dbReference>
<dbReference type="Gene3D" id="1.10.1410.10">
    <property type="match status" value="1"/>
</dbReference>
<dbReference type="Gene3D" id="3.30.460.10">
    <property type="entry name" value="Beta Polymerase, domain 2"/>
    <property type="match status" value="1"/>
</dbReference>
<dbReference type="Gene3D" id="3.30.70.590">
    <property type="entry name" value="Poly(A) polymerase predicted RNA binding domain"/>
    <property type="match status" value="1"/>
</dbReference>
<dbReference type="InterPro" id="IPR043519">
    <property type="entry name" value="NT_sf"/>
</dbReference>
<dbReference type="InterPro" id="IPR011068">
    <property type="entry name" value="NuclTrfase_I-like_C"/>
</dbReference>
<dbReference type="InterPro" id="IPR007012">
    <property type="entry name" value="PolA_pol_cen_dom"/>
</dbReference>
<dbReference type="InterPro" id="IPR048840">
    <property type="entry name" value="PolA_pol_NTPase"/>
</dbReference>
<dbReference type="InterPro" id="IPR007010">
    <property type="entry name" value="PolA_pol_RNA-bd_dom"/>
</dbReference>
<dbReference type="PANTHER" id="PTHR10682:SF31">
    <property type="entry name" value="NUCLEAR POLY(A) POLYMERASE 2"/>
    <property type="match status" value="1"/>
</dbReference>
<dbReference type="PANTHER" id="PTHR10682">
    <property type="entry name" value="POLY A POLYMERASE"/>
    <property type="match status" value="1"/>
</dbReference>
<dbReference type="Pfam" id="PF04928">
    <property type="entry name" value="PAP_central"/>
    <property type="match status" value="1"/>
</dbReference>
<dbReference type="Pfam" id="PF20750">
    <property type="entry name" value="PAP_NTPase"/>
    <property type="match status" value="1"/>
</dbReference>
<dbReference type="Pfam" id="PF04926">
    <property type="entry name" value="PAP_RNA-bind"/>
    <property type="match status" value="1"/>
</dbReference>
<dbReference type="SUPFAM" id="SSF81301">
    <property type="entry name" value="Nucleotidyltransferase"/>
    <property type="match status" value="1"/>
</dbReference>
<dbReference type="SUPFAM" id="SSF55003">
    <property type="entry name" value="PAP/Archaeal CCA-adding enzyme, C-terminal domain"/>
    <property type="match status" value="1"/>
</dbReference>
<dbReference type="SUPFAM" id="SSF81631">
    <property type="entry name" value="PAP/OAS1 substrate-binding domain"/>
    <property type="match status" value="1"/>
</dbReference>
<accession>O82312</accession>
<accession>F4ISP7</accession>
<accession>F4ISP8</accession>
<accession>F4ISP9</accession>
<accession>Q94BP6</accession>
<accession>Q9LKX0</accession>
<feature type="chain" id="PRO_0000431346" description="Nuclear poly(A) polymerase 2">
    <location>
        <begin position="1"/>
        <end position="800"/>
    </location>
</feature>
<feature type="region of interest" description="Disordered" evidence="4">
    <location>
        <begin position="497"/>
        <end position="576"/>
    </location>
</feature>
<feature type="short sequence motif" description="Nuclear localization signal 1" evidence="3">
    <location>
        <begin position="487"/>
        <end position="494"/>
    </location>
</feature>
<feature type="short sequence motif" description="Nuclear localization signal 2" evidence="3">
    <location>
        <begin position="533"/>
        <end position="540"/>
    </location>
</feature>
<feature type="compositionally biased region" description="Basic and acidic residues" evidence="4">
    <location>
        <begin position="527"/>
        <end position="538"/>
    </location>
</feature>
<feature type="compositionally biased region" description="Polar residues" evidence="4">
    <location>
        <begin position="564"/>
        <end position="575"/>
    </location>
</feature>
<feature type="binding site" evidence="1">
    <location>
        <begin position="103"/>
        <end position="105"/>
    </location>
    <ligand>
        <name>ATP</name>
        <dbReference type="ChEBI" id="CHEBI:30616"/>
    </ligand>
</feature>
<feature type="binding site" evidence="2">
    <location>
        <begin position="115"/>
        <end position="118"/>
    </location>
    <ligand>
        <name>ATP</name>
        <dbReference type="ChEBI" id="CHEBI:30616"/>
    </ligand>
</feature>
<feature type="binding site" evidence="1">
    <location>
        <position position="116"/>
    </location>
    <ligand>
        <name>Mg(2+)</name>
        <dbReference type="ChEBI" id="CHEBI:18420"/>
        <label>1</label>
        <note>catalytic</note>
    </ligand>
</feature>
<feature type="binding site" evidence="1">
    <location>
        <position position="116"/>
    </location>
    <ligand>
        <name>Mg(2+)</name>
        <dbReference type="ChEBI" id="CHEBI:18420"/>
        <label>2</label>
        <note>catalytic</note>
    </ligand>
</feature>
<feature type="binding site" evidence="1">
    <location>
        <position position="118"/>
    </location>
    <ligand>
        <name>Mg(2+)</name>
        <dbReference type="ChEBI" id="CHEBI:18420"/>
        <label>1</label>
        <note>catalytic</note>
    </ligand>
</feature>
<feature type="binding site" evidence="1">
    <location>
        <position position="118"/>
    </location>
    <ligand>
        <name>Mg(2+)</name>
        <dbReference type="ChEBI" id="CHEBI:18420"/>
        <label>2</label>
        <note>catalytic</note>
    </ligand>
</feature>
<feature type="binding site" evidence="1">
    <location>
        <position position="171"/>
    </location>
    <ligand>
        <name>ATP</name>
        <dbReference type="ChEBI" id="CHEBI:30616"/>
    </ligand>
</feature>
<feature type="binding site" evidence="1">
    <location>
        <position position="171"/>
    </location>
    <ligand>
        <name>Mg(2+)</name>
        <dbReference type="ChEBI" id="CHEBI:18420"/>
        <label>2</label>
        <note>catalytic</note>
    </ligand>
</feature>
<feature type="binding site" evidence="1">
    <location>
        <position position="232"/>
    </location>
    <ligand>
        <name>ATP</name>
        <dbReference type="ChEBI" id="CHEBI:30616"/>
    </ligand>
</feature>
<feature type="binding site" evidence="1">
    <location>
        <position position="241"/>
    </location>
    <ligand>
        <name>ATP</name>
        <dbReference type="ChEBI" id="CHEBI:30616"/>
    </ligand>
</feature>
<feature type="binding site" evidence="1">
    <location>
        <begin position="250"/>
        <end position="251"/>
    </location>
    <ligand>
        <name>ATP</name>
        <dbReference type="ChEBI" id="CHEBI:30616"/>
    </ligand>
</feature>
<feature type="site" description="Interaction with RNA" evidence="2">
    <location>
        <position position="162"/>
    </location>
</feature>
<feature type="site" description="Interaction with RNA" evidence="2">
    <location>
        <position position="332"/>
    </location>
</feature>
<feature type="site" description="Interaction with RNA" evidence="2">
    <location>
        <position position="403"/>
    </location>
</feature>
<feature type="site" description="Interaction with RNA" evidence="2">
    <location>
        <position position="408"/>
    </location>
</feature>
<feature type="site" description="Interaction with RNA" evidence="2">
    <location>
        <position position="616"/>
    </location>
</feature>
<feature type="splice variant" id="VSP_057239" description="In isoform 5.">
    <original>HFRTTLRCLKYWAKKRGVYSNV</original>
    <variation>MPEVLG</variation>
    <location>
        <begin position="223"/>
        <end position="244"/>
    </location>
</feature>
<feature type="splice variant" id="VSP_057240" description="In isoform 3.">
    <original>RSESLQNEMMR</original>
    <variation>SSRRLSLKSVA</variation>
    <location>
        <begin position="777"/>
        <end position="787"/>
    </location>
</feature>
<feature type="splice variant" id="VSP_057241" description="In isoform 4.">
    <original>RSESLQNEMM</original>
    <variation>SRRLSLKSVA</variation>
    <location>
        <begin position="777"/>
        <end position="786"/>
    </location>
</feature>
<feature type="splice variant" id="VSP_057242" description="In isoform 2.">
    <original>RHVFLQPIIGLCKS</original>
    <variation>SSRRLSLKSVA</variation>
    <location>
        <begin position="787"/>
        <end position="800"/>
    </location>
</feature>
<feature type="splice variant" id="VSP_057243" description="In isoform 4.">
    <location>
        <begin position="787"/>
        <end position="800"/>
    </location>
</feature>
<feature type="splice variant" id="VSP_057244" description="In isoform 3.">
    <location>
        <begin position="788"/>
        <end position="800"/>
    </location>
</feature>
<proteinExistence type="evidence at protein level"/>
<evidence type="ECO:0000250" key="1">
    <source>
        <dbReference type="UniProtKB" id="P25500"/>
    </source>
</evidence>
<evidence type="ECO:0000250" key="2">
    <source>
        <dbReference type="UniProtKB" id="P29468"/>
    </source>
</evidence>
<evidence type="ECO:0000255" key="3">
    <source>
        <dbReference type="PROSITE-ProRule" id="PRU00768"/>
    </source>
</evidence>
<evidence type="ECO:0000256" key="4">
    <source>
        <dbReference type="SAM" id="MobiDB-lite"/>
    </source>
</evidence>
<evidence type="ECO:0000269" key="5">
    <source>
    </source>
</evidence>
<evidence type="ECO:0000269" key="6">
    <source>
    </source>
</evidence>
<evidence type="ECO:0000269" key="7">
    <source>
    </source>
</evidence>
<evidence type="ECO:0000303" key="8">
    <source>
    </source>
</evidence>
<evidence type="ECO:0000305" key="9"/>
<evidence type="ECO:0000305" key="10">
    <source>
    </source>
</evidence>
<evidence type="ECO:0000312" key="11">
    <source>
        <dbReference type="Araport" id="AT2G25850"/>
    </source>
</evidence>
<evidence type="ECO:0000312" key="12">
    <source>
        <dbReference type="EMBL" id="AAC42245.2"/>
    </source>
</evidence>
<evidence type="ECO:0000312" key="13">
    <source>
        <dbReference type="Proteomes" id="UP000006548"/>
    </source>
</evidence>
<sequence>MVSTQQRTDDDSSQPVKASLKSYGITEPLSIAGPSAADVKRNLELEKFLVDEGLYESKEETMRREEVVVRIDQIVKHWVKQLTRQRGYTDQMVEDANAVIFTFGSYRLGVHGPMADIDTLCVGPSYVNREEDFFIFFRDILAEMEEVTELQPVTDAHVPVMKFKFQGISIDLLYASISLLVIPQDLDISNSSVLCDVDEQTVRSLNGCRVADQILKLVPNSEHFRTTLRCLKYWAKKRGVYSNVTGFLGGVNWALLVARLCQFYPNAIPSMLVSRFFRVYTQWRWPNPVMLCAIEEDDLSFPVWDPRKNHRDRYHLMPIITPAYPCMNSSYNVSQSTLRVMTEQFQFGNTICQEIELNKQHWSSLFQQYMFFEAYKNYLQVDVLAADAEDLLAWKGWVESRFRQLTLKIERDTNGMLMCHPQPNEYVDTSKQFRHCAFFMGLQRADGFGGQECQQFDIRGTVDEFRQEVNMYMFWRPGMDVHVSHVRRRQLPSFVFPNGYKRSRQSRHQSQQCREPGDEGVGSLSDSVERYAKRKNDDEIMNSRPEKREKRASCSLHTLDAASPDSSGITTSGTPQIGIVPGPRAECLVTGDLVCNVTSLPNVEVEAEKFISKITELRKFSQYEHTSGSEQILEVDSRALVQSYHDLAEPVAKHVRPDLSALLACEGGQNKEIGHDMGSESINDTDTQHLPRRLNVNEDVDEVEREAKLGEIAGGVLWNGHCGRNLDHEGFVTPANLDSAVENRNLHSDGLFKSGLPEELQSNSLLSGTGKLDDGARSESLQNEMMRHVFLQPIIGLCKS</sequence>
<comment type="function">
    <text evidence="1 5 7 10">Essential protein (PubMed:19956626). Polymerase that creates the 3'-poly(A) tail of mRNA's (PubMed:15297145). Also required for the endoribonucleolytic cleavage reaction at some polyadenylation sites. May acquire specificity through interaction with a cleavage and polyadenylation specificity factor (CPSF) at its C-terminus (By similarity). Mediates the polyadenylation of RNAs that are associated with polynucleotide phosphorylase (e.g. PNP1) (PubMed:10872823).</text>
</comment>
<comment type="catalytic activity">
    <reaction evidence="5">
        <text>RNA(n) + ATP = RNA(n)-3'-adenine ribonucleotide + diphosphate</text>
        <dbReference type="Rhea" id="RHEA:11332"/>
        <dbReference type="Rhea" id="RHEA-COMP:14527"/>
        <dbReference type="Rhea" id="RHEA-COMP:17347"/>
        <dbReference type="ChEBI" id="CHEBI:30616"/>
        <dbReference type="ChEBI" id="CHEBI:33019"/>
        <dbReference type="ChEBI" id="CHEBI:140395"/>
        <dbReference type="ChEBI" id="CHEBI:173115"/>
        <dbReference type="EC" id="2.7.7.19"/>
    </reaction>
</comment>
<comment type="cofactor">
    <cofactor evidence="1">
        <name>Mg(2+)</name>
        <dbReference type="ChEBI" id="CHEBI:18420"/>
    </cofactor>
    <cofactor evidence="1">
        <name>Mn(2+)</name>
        <dbReference type="ChEBI" id="CHEBI:29035"/>
    </cofactor>
    <text evidence="1">Binds 2 magnesium ions. Also active with manganese.</text>
</comment>
<comment type="subunit">
    <text evidence="1 6">Monomer (By similarity). Forms a complex with cleavage and polyadenylation specificity factor (CPSF) subunits CPSF100, CPSF30, FIPS5 and PABN2 (PubMed:18479511).</text>
</comment>
<comment type="interaction">
    <interactant intactId="EBI-1775513">
        <id>O82312</id>
    </interactant>
    <interactant intactId="EBI-1775444">
        <id>Q9LKF9</id>
        <label>CPSF100</label>
    </interactant>
    <organismsDiffer>false</organismsDiffer>
    <experiments>5</experiments>
</comment>
<comment type="interaction">
    <interactant intactId="EBI-1775513">
        <id>O82312</id>
    </interactant>
    <interactant intactId="EBI-962511">
        <id>A9LNK9</id>
        <label>CPSF30</label>
    </interactant>
    <organismsDiffer>false</organismsDiffer>
    <experiments>3</experiments>
</comment>
<comment type="subcellular location">
    <subcellularLocation>
        <location evidence="1 3">Nucleus</location>
    </subcellularLocation>
    <subcellularLocation>
        <location evidence="7">Cytoplasm</location>
    </subcellularLocation>
</comment>
<comment type="alternative products">
    <event type="alternative splicing"/>
    <isoform>
        <id>O82312-1</id>
        <name>1</name>
        <sequence type="displayed"/>
    </isoform>
    <isoform>
        <id>O82312-2</id>
        <name>2</name>
        <sequence type="described" ref="VSP_057242"/>
    </isoform>
    <isoform>
        <id>O82312-3</id>
        <name>3</name>
        <sequence type="described" ref="VSP_057240 VSP_057244"/>
    </isoform>
    <isoform>
        <id>O82312-4</id>
        <name>4</name>
        <sequence type="described" ref="VSP_057241 VSP_057243"/>
    </isoform>
    <isoform>
        <id>O82312-5</id>
        <name>5</name>
        <sequence type="described" ref="VSP_057239"/>
    </isoform>
</comment>
<comment type="tissue specificity">
    <text evidence="5 7">Mostly expressed in flowers (highly in the style, receptacle and pedicel, but weakly in the vasculature of sepals) and hypocotyls, and, to a lower extent, in roots and stems. Barely detected in leaves (petioles and vascular system) (PubMed:15297145, PubMed:19956626).</text>
</comment>
<comment type="disruption phenotype">
    <text evidence="7">Lethal.</text>
</comment>
<comment type="similarity">
    <text evidence="9">Belongs to the poly(A) polymerase family.</text>
</comment>
<reference key="1">
    <citation type="journal article" date="2000" name="Biochem. Biophys. Res. Commun.">
        <title>Nuclear and chloroplast poly(A) polymerases from plants share a novel biochemical property.</title>
        <authorList>
            <person name="Hunt A.G."/>
            <person name="Meeks L.R."/>
            <person name="Forbes K.P."/>
            <person name="Das Gupta J."/>
            <person name="Mogen B.D."/>
        </authorList>
    </citation>
    <scope>NUCLEOTIDE SEQUENCE [MRNA] (ISOFORM 1)</scope>
    <scope>FUNCTION</scope>
</reference>
<reference key="2">
    <citation type="journal article" date="1999" name="Nature">
        <title>Sequence and analysis of chromosome 2 of the plant Arabidopsis thaliana.</title>
        <authorList>
            <person name="Lin X."/>
            <person name="Kaul S."/>
            <person name="Rounsley S.D."/>
            <person name="Shea T.P."/>
            <person name="Benito M.-I."/>
            <person name="Town C.D."/>
            <person name="Fujii C.Y."/>
            <person name="Mason T.M."/>
            <person name="Bowman C.L."/>
            <person name="Barnstead M.E."/>
            <person name="Feldblyum T.V."/>
            <person name="Buell C.R."/>
            <person name="Ketchum K.A."/>
            <person name="Lee J.J."/>
            <person name="Ronning C.M."/>
            <person name="Koo H.L."/>
            <person name="Moffat K.S."/>
            <person name="Cronin L.A."/>
            <person name="Shen M."/>
            <person name="Pai G."/>
            <person name="Van Aken S."/>
            <person name="Umayam L."/>
            <person name="Tallon L.J."/>
            <person name="Gill J.E."/>
            <person name="Adams M.D."/>
            <person name="Carrera A.J."/>
            <person name="Creasy T.H."/>
            <person name="Goodman H.M."/>
            <person name="Somerville C.R."/>
            <person name="Copenhaver G.P."/>
            <person name="Preuss D."/>
            <person name="Nierman W.C."/>
            <person name="White O."/>
            <person name="Eisen J.A."/>
            <person name="Salzberg S.L."/>
            <person name="Fraser C.M."/>
            <person name="Venter J.C."/>
        </authorList>
    </citation>
    <scope>NUCLEOTIDE SEQUENCE [LARGE SCALE GENOMIC DNA]</scope>
    <source>
        <strain>cv. Columbia</strain>
    </source>
</reference>
<reference key="3">
    <citation type="journal article" date="2017" name="Plant J.">
        <title>Araport11: a complete reannotation of the Arabidopsis thaliana reference genome.</title>
        <authorList>
            <person name="Cheng C.Y."/>
            <person name="Krishnakumar V."/>
            <person name="Chan A.P."/>
            <person name="Thibaud-Nissen F."/>
            <person name="Schobel S."/>
            <person name="Town C.D."/>
        </authorList>
    </citation>
    <scope>GENOME REANNOTATION</scope>
    <source>
        <strain>cv. Columbia</strain>
    </source>
</reference>
<reference key="4">
    <citation type="journal article" date="2003" name="Science">
        <title>Empirical analysis of transcriptional activity in the Arabidopsis genome.</title>
        <authorList>
            <person name="Yamada K."/>
            <person name="Lim J."/>
            <person name="Dale J.M."/>
            <person name="Chen H."/>
            <person name="Shinn P."/>
            <person name="Palm C.J."/>
            <person name="Southwick A.M."/>
            <person name="Wu H.C."/>
            <person name="Kim C.J."/>
            <person name="Nguyen M."/>
            <person name="Pham P.K."/>
            <person name="Cheuk R.F."/>
            <person name="Karlin-Newmann G."/>
            <person name="Liu S.X."/>
            <person name="Lam B."/>
            <person name="Sakano H."/>
            <person name="Wu T."/>
            <person name="Yu G."/>
            <person name="Miranda M."/>
            <person name="Quach H.L."/>
            <person name="Tripp M."/>
            <person name="Chang C.H."/>
            <person name="Lee J.M."/>
            <person name="Toriumi M.J."/>
            <person name="Chan M.M."/>
            <person name="Tang C.C."/>
            <person name="Onodera C.S."/>
            <person name="Deng J.M."/>
            <person name="Akiyama K."/>
            <person name="Ansari Y."/>
            <person name="Arakawa T."/>
            <person name="Banh J."/>
            <person name="Banno F."/>
            <person name="Bowser L."/>
            <person name="Brooks S.Y."/>
            <person name="Carninci P."/>
            <person name="Chao Q."/>
            <person name="Choy N."/>
            <person name="Enju A."/>
            <person name="Goldsmith A.D."/>
            <person name="Gurjal M."/>
            <person name="Hansen N.F."/>
            <person name="Hayashizaki Y."/>
            <person name="Johnson-Hopson C."/>
            <person name="Hsuan V.W."/>
            <person name="Iida K."/>
            <person name="Karnes M."/>
            <person name="Khan S."/>
            <person name="Koesema E."/>
            <person name="Ishida J."/>
            <person name="Jiang P.X."/>
            <person name="Jones T."/>
            <person name="Kawai J."/>
            <person name="Kamiya A."/>
            <person name="Meyers C."/>
            <person name="Nakajima M."/>
            <person name="Narusaka M."/>
            <person name="Seki M."/>
            <person name="Sakurai T."/>
            <person name="Satou M."/>
            <person name="Tamse R."/>
            <person name="Vaysberg M."/>
            <person name="Wallender E.K."/>
            <person name="Wong C."/>
            <person name="Yamamura Y."/>
            <person name="Yuan S."/>
            <person name="Shinozaki K."/>
            <person name="Davis R.W."/>
            <person name="Theologis A."/>
            <person name="Ecker J.R."/>
        </authorList>
    </citation>
    <scope>NUCLEOTIDE SEQUENCE [LARGE SCALE MRNA] (ISOFORM 1)</scope>
    <source>
        <strain>cv. Columbia</strain>
    </source>
</reference>
<reference key="5">
    <citation type="journal article" date="2004" name="Biochim. Biophys. Acta">
        <title>Novel alternative splicing of mRNAs encoding poly(A) polymerases in Arabidopsis.</title>
        <authorList>
            <person name="Addepalli B."/>
            <person name="Meeks L.R."/>
            <person name="Forbes K.P."/>
            <person name="Hunt A.G."/>
        </authorList>
    </citation>
    <scope>ALTERNATIVE SPLICING</scope>
    <scope>FUNCTION</scope>
    <scope>CATALYTIC ACTIVITY</scope>
    <scope>TISSUE SPECIFICITY</scope>
    <scope>GENE FAMILY</scope>
    <scope>NOMENCLATURE</scope>
</reference>
<reference key="6">
    <citation type="journal article" date="2008" name="BMC Genomics">
        <title>Arabidopsis mRNA polyadenylation machinery: comprehensive analysis of protein-protein interactions and gene expression profiling.</title>
        <authorList>
            <person name="Hunt A.G."/>
            <person name="Xu R."/>
            <person name="Addepalli B."/>
            <person name="Rao S."/>
            <person name="Forbes K.P."/>
            <person name="Meeks L.R."/>
            <person name="Xing D."/>
            <person name="Mo M."/>
            <person name="Zhao H."/>
            <person name="Bandyopadhyay A."/>
            <person name="Dampanaboina L."/>
            <person name="Marion A."/>
            <person name="Von Lanken C."/>
            <person name="Li Q.Q."/>
        </authorList>
    </citation>
    <scope>INTERACTION WITH CPSF100; CPSF30; FIPS5 AND PABN2</scope>
    <scope>GENE FAMILY</scope>
    <scope>NOMENCLATURE</scope>
</reference>
<reference key="7">
    <citation type="journal article" date="2009" name="PLoS ONE">
        <title>Characterization of genes encoding poly(A) polymerases in plants: evidence for duplication and functional specialization.</title>
        <authorList>
            <person name="Meeks L.R."/>
            <person name="Addepalli B."/>
            <person name="Hunt A.G."/>
        </authorList>
    </citation>
    <scope>FUNCTION</scope>
    <scope>DISRUPTION PHENOTYPE</scope>
    <scope>SUBCELLULAR LOCATION</scope>
    <scope>TISSUE SPECIFICITY</scope>
</reference>
<organism evidence="13">
    <name type="scientific">Arabidopsis thaliana</name>
    <name type="common">Mouse-ear cress</name>
    <dbReference type="NCBI Taxonomy" id="3702"/>
    <lineage>
        <taxon>Eukaryota</taxon>
        <taxon>Viridiplantae</taxon>
        <taxon>Streptophyta</taxon>
        <taxon>Embryophyta</taxon>
        <taxon>Tracheophyta</taxon>
        <taxon>Spermatophyta</taxon>
        <taxon>Magnoliopsida</taxon>
        <taxon>eudicotyledons</taxon>
        <taxon>Gunneridae</taxon>
        <taxon>Pentapetalae</taxon>
        <taxon>rosids</taxon>
        <taxon>malvids</taxon>
        <taxon>Brassicales</taxon>
        <taxon>Brassicaceae</taxon>
        <taxon>Camelineae</taxon>
        <taxon>Arabidopsis</taxon>
    </lineage>
</organism>
<protein>
    <recommendedName>
        <fullName evidence="8">Nuclear poly(A) polymerase 2</fullName>
        <shortName evidence="9">PAP(II)</shortName>
        <shortName evidence="9">Poly(A) polymerase II</shortName>
        <ecNumber evidence="5">2.7.7.19</ecNumber>
    </recommendedName>
    <alternativeName>
        <fullName evidence="9">Polynucleotide adenylyltransferase 2</fullName>
    </alternativeName>
</protein>
<keyword id="KW-0025">Alternative splicing</keyword>
<keyword id="KW-0067">ATP-binding</keyword>
<keyword id="KW-0963">Cytoplasm</keyword>
<keyword id="KW-0460">Magnesium</keyword>
<keyword id="KW-0479">Metal-binding</keyword>
<keyword id="KW-0507">mRNA processing</keyword>
<keyword id="KW-0547">Nucleotide-binding</keyword>
<keyword id="KW-0548">Nucleotidyltransferase</keyword>
<keyword id="KW-0539">Nucleus</keyword>
<keyword id="KW-1185">Reference proteome</keyword>
<keyword id="KW-0677">Repeat</keyword>
<keyword id="KW-0808">Transferase</keyword>